<accession>Q215T6</accession>
<proteinExistence type="inferred from homology"/>
<feature type="chain" id="PRO_1000005331" description="Small ribosomal subunit protein bS6">
    <location>
        <begin position="1"/>
        <end position="168"/>
    </location>
</feature>
<feature type="region of interest" description="Disordered" evidence="2">
    <location>
        <begin position="97"/>
        <end position="168"/>
    </location>
</feature>
<feature type="compositionally biased region" description="Basic and acidic residues" evidence="2">
    <location>
        <begin position="105"/>
        <end position="158"/>
    </location>
</feature>
<name>RS6_RHOPB</name>
<gene>
    <name evidence="1" type="primary">rpsF</name>
    <name type="ordered locus">RPC_2296</name>
</gene>
<reference key="1">
    <citation type="submission" date="2006-03" db="EMBL/GenBank/DDBJ databases">
        <title>Complete sequence of Rhodopseudomonas palustris BisB18.</title>
        <authorList>
            <consortium name="US DOE Joint Genome Institute"/>
            <person name="Copeland A."/>
            <person name="Lucas S."/>
            <person name="Lapidus A."/>
            <person name="Barry K."/>
            <person name="Detter J.C."/>
            <person name="Glavina del Rio T."/>
            <person name="Hammon N."/>
            <person name="Israni S."/>
            <person name="Dalin E."/>
            <person name="Tice H."/>
            <person name="Pitluck S."/>
            <person name="Chain P."/>
            <person name="Malfatti S."/>
            <person name="Shin M."/>
            <person name="Vergez L."/>
            <person name="Schmutz J."/>
            <person name="Larimer F."/>
            <person name="Land M."/>
            <person name="Hauser L."/>
            <person name="Pelletier D.A."/>
            <person name="Kyrpides N."/>
            <person name="Anderson I."/>
            <person name="Oda Y."/>
            <person name="Harwood C.S."/>
            <person name="Richardson P."/>
        </authorList>
    </citation>
    <scope>NUCLEOTIDE SEQUENCE [LARGE SCALE GENOMIC DNA]</scope>
    <source>
        <strain>BisB18</strain>
    </source>
</reference>
<comment type="function">
    <text evidence="1">Binds together with bS18 to 16S ribosomal RNA.</text>
</comment>
<comment type="similarity">
    <text evidence="1">Belongs to the bacterial ribosomal protein bS6 family.</text>
</comment>
<dbReference type="EMBL" id="CP000301">
    <property type="protein sequence ID" value="ABD87850.1"/>
    <property type="molecule type" value="Genomic_DNA"/>
</dbReference>
<dbReference type="SMR" id="Q215T6"/>
<dbReference type="STRING" id="316056.RPC_2296"/>
<dbReference type="KEGG" id="rpc:RPC_2296"/>
<dbReference type="eggNOG" id="COG0360">
    <property type="taxonomic scope" value="Bacteria"/>
</dbReference>
<dbReference type="HOGENOM" id="CLU_113441_2_0_5"/>
<dbReference type="OrthoDB" id="9812702at2"/>
<dbReference type="GO" id="GO:0022627">
    <property type="term" value="C:cytosolic small ribosomal subunit"/>
    <property type="evidence" value="ECO:0007669"/>
    <property type="project" value="TreeGrafter"/>
</dbReference>
<dbReference type="GO" id="GO:0070181">
    <property type="term" value="F:small ribosomal subunit rRNA binding"/>
    <property type="evidence" value="ECO:0007669"/>
    <property type="project" value="TreeGrafter"/>
</dbReference>
<dbReference type="GO" id="GO:0003735">
    <property type="term" value="F:structural constituent of ribosome"/>
    <property type="evidence" value="ECO:0007669"/>
    <property type="project" value="InterPro"/>
</dbReference>
<dbReference type="GO" id="GO:0006412">
    <property type="term" value="P:translation"/>
    <property type="evidence" value="ECO:0007669"/>
    <property type="project" value="UniProtKB-UniRule"/>
</dbReference>
<dbReference type="CDD" id="cd00473">
    <property type="entry name" value="bS6"/>
    <property type="match status" value="1"/>
</dbReference>
<dbReference type="Gene3D" id="3.30.70.60">
    <property type="match status" value="1"/>
</dbReference>
<dbReference type="HAMAP" id="MF_00360">
    <property type="entry name" value="Ribosomal_bS6"/>
    <property type="match status" value="1"/>
</dbReference>
<dbReference type="InterPro" id="IPR000529">
    <property type="entry name" value="Ribosomal_bS6"/>
</dbReference>
<dbReference type="InterPro" id="IPR035980">
    <property type="entry name" value="Ribosomal_bS6_sf"/>
</dbReference>
<dbReference type="InterPro" id="IPR020814">
    <property type="entry name" value="Ribosomal_S6_plastid/chlpt"/>
</dbReference>
<dbReference type="InterPro" id="IPR014717">
    <property type="entry name" value="Transl_elong_EF1B/ribsomal_bS6"/>
</dbReference>
<dbReference type="NCBIfam" id="TIGR00166">
    <property type="entry name" value="S6"/>
    <property type="match status" value="1"/>
</dbReference>
<dbReference type="PANTHER" id="PTHR21011">
    <property type="entry name" value="MITOCHONDRIAL 28S RIBOSOMAL PROTEIN S6"/>
    <property type="match status" value="1"/>
</dbReference>
<dbReference type="PANTHER" id="PTHR21011:SF1">
    <property type="entry name" value="SMALL RIBOSOMAL SUBUNIT PROTEIN BS6M"/>
    <property type="match status" value="1"/>
</dbReference>
<dbReference type="Pfam" id="PF01250">
    <property type="entry name" value="Ribosomal_S6"/>
    <property type="match status" value="1"/>
</dbReference>
<dbReference type="SUPFAM" id="SSF54995">
    <property type="entry name" value="Ribosomal protein S6"/>
    <property type="match status" value="1"/>
</dbReference>
<sequence>MPLYEHVFLARQDASTQQVEELTTQITSVIEGLGGKVVKMESWGVRSLTYRMHKNRKAHFVLLNIDGPSAVVAEVERQERINEDVIRYLTVRVDELEEGPSAMMRKADRDRDRDDRGGFRGDREGGFRGDREGGFRGGDREGGGFRGDRGPRRPRDDAAPAPAAATEE</sequence>
<evidence type="ECO:0000255" key="1">
    <source>
        <dbReference type="HAMAP-Rule" id="MF_00360"/>
    </source>
</evidence>
<evidence type="ECO:0000256" key="2">
    <source>
        <dbReference type="SAM" id="MobiDB-lite"/>
    </source>
</evidence>
<evidence type="ECO:0000305" key="3"/>
<organism>
    <name type="scientific">Rhodopseudomonas palustris (strain BisB18)</name>
    <dbReference type="NCBI Taxonomy" id="316056"/>
    <lineage>
        <taxon>Bacteria</taxon>
        <taxon>Pseudomonadati</taxon>
        <taxon>Pseudomonadota</taxon>
        <taxon>Alphaproteobacteria</taxon>
        <taxon>Hyphomicrobiales</taxon>
        <taxon>Nitrobacteraceae</taxon>
        <taxon>Rhodopseudomonas</taxon>
    </lineage>
</organism>
<keyword id="KW-0687">Ribonucleoprotein</keyword>
<keyword id="KW-0689">Ribosomal protein</keyword>
<keyword id="KW-0694">RNA-binding</keyword>
<keyword id="KW-0699">rRNA-binding</keyword>
<protein>
    <recommendedName>
        <fullName evidence="1">Small ribosomal subunit protein bS6</fullName>
    </recommendedName>
    <alternativeName>
        <fullName evidence="3">30S ribosomal protein S6</fullName>
    </alternativeName>
</protein>